<organism>
    <name type="scientific">Xenopus laevis</name>
    <name type="common">African clawed frog</name>
    <dbReference type="NCBI Taxonomy" id="8355"/>
    <lineage>
        <taxon>Eukaryota</taxon>
        <taxon>Metazoa</taxon>
        <taxon>Chordata</taxon>
        <taxon>Craniata</taxon>
        <taxon>Vertebrata</taxon>
        <taxon>Euteleostomi</taxon>
        <taxon>Amphibia</taxon>
        <taxon>Batrachia</taxon>
        <taxon>Anura</taxon>
        <taxon>Pipoidea</taxon>
        <taxon>Pipidae</taxon>
        <taxon>Xenopodinae</taxon>
        <taxon>Xenopus</taxon>
        <taxon>Xenopus</taxon>
    </lineage>
</organism>
<dbReference type="EMBL" id="BC046674">
    <property type="protein sequence ID" value="AAH46674.1"/>
    <property type="molecule type" value="mRNA"/>
</dbReference>
<dbReference type="RefSeq" id="NP_001079650.1">
    <property type="nucleotide sequence ID" value="NM_001086181.1"/>
</dbReference>
<dbReference type="SMR" id="Q7ZWW7"/>
<dbReference type="GlyCosmos" id="Q7ZWW7">
    <property type="glycosylation" value="4 sites, No reported glycans"/>
</dbReference>
<dbReference type="DNASU" id="379337"/>
<dbReference type="GeneID" id="379337"/>
<dbReference type="KEGG" id="xla:379337"/>
<dbReference type="AGR" id="Xenbase:XB-GENE-942518"/>
<dbReference type="CTD" id="379337"/>
<dbReference type="Xenbase" id="XB-GENE-942518">
    <property type="gene designation" value="tspan31.L"/>
</dbReference>
<dbReference type="OMA" id="CHAPCKA"/>
<dbReference type="OrthoDB" id="5845060at2759"/>
<dbReference type="Proteomes" id="UP000186698">
    <property type="component" value="Chromosome 2L"/>
</dbReference>
<dbReference type="Bgee" id="379337">
    <property type="expression patterns" value="Expressed in neurula embryo and 19 other cell types or tissues"/>
</dbReference>
<dbReference type="GO" id="GO:0016020">
    <property type="term" value="C:membrane"/>
    <property type="evidence" value="ECO:0007669"/>
    <property type="project" value="UniProtKB-SubCell"/>
</dbReference>
<dbReference type="InterPro" id="IPR018499">
    <property type="entry name" value="Tetraspanin/Peripherin"/>
</dbReference>
<dbReference type="InterPro" id="IPR000301">
    <property type="entry name" value="Tetraspanin_animals"/>
</dbReference>
<dbReference type="PANTHER" id="PTHR19282">
    <property type="entry name" value="TETRASPANIN"/>
    <property type="match status" value="1"/>
</dbReference>
<dbReference type="PANTHER" id="PTHR19282:SF3">
    <property type="entry name" value="TETRASPANIN-31"/>
    <property type="match status" value="1"/>
</dbReference>
<dbReference type="Pfam" id="PF00335">
    <property type="entry name" value="Tetraspanin"/>
    <property type="match status" value="1"/>
</dbReference>
<dbReference type="PIRSF" id="PIRSF002419">
    <property type="entry name" value="Tetraspanin"/>
    <property type="match status" value="1"/>
</dbReference>
<dbReference type="PRINTS" id="PR00259">
    <property type="entry name" value="TMFOUR"/>
</dbReference>
<name>TS31B_XENLA</name>
<evidence type="ECO:0000250" key="1"/>
<evidence type="ECO:0000255" key="2"/>
<evidence type="ECO:0000305" key="3"/>
<accession>Q7ZWW7</accession>
<comment type="subcellular location">
    <subcellularLocation>
        <location evidence="1">Membrane</location>
        <topology evidence="1">Multi-pass membrane protein</topology>
    </subcellularLocation>
</comment>
<comment type="similarity">
    <text evidence="3">Belongs to the tetraspanin (TM4SF) family.</text>
</comment>
<reference key="1">
    <citation type="submission" date="2003-02" db="EMBL/GenBank/DDBJ databases">
        <authorList>
            <consortium name="NIH - Xenopus Gene Collection (XGC) project"/>
        </authorList>
    </citation>
    <scope>NUCLEOTIDE SEQUENCE [LARGE SCALE MRNA]</scope>
    <source>
        <tissue>Embryo</tissue>
    </source>
</reference>
<protein>
    <recommendedName>
        <fullName>Tetraspanin-31-B</fullName>
        <shortName>Tspan-31-B</shortName>
    </recommendedName>
    <alternativeName>
        <fullName>Sarcoma-amplified sequence homolog B</fullName>
    </alternativeName>
</protein>
<gene>
    <name type="primary">tspan31-b</name>
    <name type="synonym">sas-b</name>
</gene>
<keyword id="KW-0325">Glycoprotein</keyword>
<keyword id="KW-0472">Membrane</keyword>
<keyword id="KW-1185">Reference proteome</keyword>
<keyword id="KW-0812">Transmembrane</keyword>
<keyword id="KW-1133">Transmembrane helix</keyword>
<feature type="chain" id="PRO_0000219277" description="Tetraspanin-31-B">
    <location>
        <begin position="1"/>
        <end position="212"/>
    </location>
</feature>
<feature type="topological domain" description="Cytoplasmic" evidence="2">
    <location>
        <begin position="1"/>
        <end position="12"/>
    </location>
</feature>
<feature type="transmembrane region" description="Helical" evidence="2">
    <location>
        <begin position="13"/>
        <end position="33"/>
    </location>
</feature>
<feature type="topological domain" description="Extracellular" evidence="2">
    <location>
        <begin position="34"/>
        <end position="44"/>
    </location>
</feature>
<feature type="transmembrane region" description="Helical" evidence="2">
    <location>
        <begin position="45"/>
        <end position="65"/>
    </location>
</feature>
<feature type="topological domain" description="Cytoplasmic" evidence="2">
    <location>
        <begin position="66"/>
        <end position="72"/>
    </location>
</feature>
<feature type="transmembrane region" description="Helical" evidence="2">
    <location>
        <begin position="73"/>
        <end position="93"/>
    </location>
</feature>
<feature type="topological domain" description="Extracellular" evidence="2">
    <location>
        <begin position="94"/>
        <end position="175"/>
    </location>
</feature>
<feature type="transmembrane region" description="Helical" evidence="2">
    <location>
        <begin position="176"/>
        <end position="196"/>
    </location>
</feature>
<feature type="topological domain" description="Cytoplasmic" evidence="2">
    <location>
        <begin position="197"/>
        <end position="212"/>
    </location>
</feature>
<feature type="glycosylation site" description="N-linked (GlcNAc...) asparagine" evidence="2">
    <location>
        <position position="100"/>
    </location>
</feature>
<feature type="glycosylation site" description="N-linked (GlcNAc...) asparagine" evidence="2">
    <location>
        <position position="109"/>
    </location>
</feature>
<feature type="glycosylation site" description="N-linked (GlcNAc...) asparagine" evidence="2">
    <location>
        <position position="117"/>
    </location>
</feature>
<feature type="glycosylation site" description="N-linked (GlcNAc...) asparagine" evidence="2">
    <location>
        <position position="134"/>
    </location>
</feature>
<sequence length="212" mass="23362">MVCGGFTCSKNALCALNVVYMLVGVLLIIVAAWGKGFGIVSSIHIIGGVIAIGVFLLLIAIIGLIGAVSHHQVMLFIYMVVLILVFIFQFIVSCSCLAMNRSQQEYLLNTTWNRMSNETRLNLEKTLDCCGFLNTTEGRDEFKQDVALCIQVCSDPHKCPSCGDKMLNHADEALKILGGVGLFFSFTEILGVWLAFRYRNQKDPRANPSAFL</sequence>
<proteinExistence type="evidence at transcript level"/>